<accession>Q9JTX0</accession>
<accession>A1ISI0</accession>
<feature type="chain" id="PRO_0000150271" description="Cysteine desulfurase IscS">
    <location>
        <begin position="1"/>
        <end position="404"/>
    </location>
</feature>
<feature type="active site" description="Cysteine persulfide intermediate" evidence="1">
    <location>
        <position position="328"/>
    </location>
</feature>
<feature type="binding site" evidence="1">
    <location>
        <begin position="75"/>
        <end position="76"/>
    </location>
    <ligand>
        <name>pyridoxal 5'-phosphate</name>
        <dbReference type="ChEBI" id="CHEBI:597326"/>
    </ligand>
</feature>
<feature type="binding site" evidence="1">
    <location>
        <position position="155"/>
    </location>
    <ligand>
        <name>pyridoxal 5'-phosphate</name>
        <dbReference type="ChEBI" id="CHEBI:597326"/>
    </ligand>
</feature>
<feature type="binding site" evidence="1">
    <location>
        <position position="183"/>
    </location>
    <ligand>
        <name>pyridoxal 5'-phosphate</name>
        <dbReference type="ChEBI" id="CHEBI:597326"/>
    </ligand>
</feature>
<feature type="binding site" evidence="1">
    <location>
        <begin position="203"/>
        <end position="205"/>
    </location>
    <ligand>
        <name>pyridoxal 5'-phosphate</name>
        <dbReference type="ChEBI" id="CHEBI:597326"/>
    </ligand>
</feature>
<feature type="binding site" evidence="1">
    <location>
        <position position="243"/>
    </location>
    <ligand>
        <name>pyridoxal 5'-phosphate</name>
        <dbReference type="ChEBI" id="CHEBI:597326"/>
    </ligand>
</feature>
<feature type="binding site" description="via persulfide group" evidence="1">
    <location>
        <position position="328"/>
    </location>
    <ligand>
        <name>[2Fe-2S] cluster</name>
        <dbReference type="ChEBI" id="CHEBI:190135"/>
        <note>ligand shared with IscU</note>
    </ligand>
</feature>
<feature type="modified residue" description="N6-(pyridoxal phosphate)lysine" evidence="1">
    <location>
        <position position="206"/>
    </location>
</feature>
<evidence type="ECO:0000255" key="1">
    <source>
        <dbReference type="HAMAP-Rule" id="MF_00331"/>
    </source>
</evidence>
<organism>
    <name type="scientific">Neisseria meningitidis serogroup A / serotype 4A (strain DSM 15465 / Z2491)</name>
    <dbReference type="NCBI Taxonomy" id="122587"/>
    <lineage>
        <taxon>Bacteria</taxon>
        <taxon>Pseudomonadati</taxon>
        <taxon>Pseudomonadota</taxon>
        <taxon>Betaproteobacteria</taxon>
        <taxon>Neisseriales</taxon>
        <taxon>Neisseriaceae</taxon>
        <taxon>Neisseria</taxon>
    </lineage>
</organism>
<reference key="1">
    <citation type="journal article" date="2000" name="Nature">
        <title>Complete DNA sequence of a serogroup A strain of Neisseria meningitidis Z2491.</title>
        <authorList>
            <person name="Parkhill J."/>
            <person name="Achtman M."/>
            <person name="James K.D."/>
            <person name="Bentley S.D."/>
            <person name="Churcher C.M."/>
            <person name="Klee S.R."/>
            <person name="Morelli G."/>
            <person name="Basham D."/>
            <person name="Brown D."/>
            <person name="Chillingworth T."/>
            <person name="Davies R.M."/>
            <person name="Davis P."/>
            <person name="Devlin K."/>
            <person name="Feltwell T."/>
            <person name="Hamlin N."/>
            <person name="Holroyd S."/>
            <person name="Jagels K."/>
            <person name="Leather S."/>
            <person name="Moule S."/>
            <person name="Mungall K.L."/>
            <person name="Quail M.A."/>
            <person name="Rajandream M.A."/>
            <person name="Rutherford K.M."/>
            <person name="Simmonds M."/>
            <person name="Skelton J."/>
            <person name="Whitehead S."/>
            <person name="Spratt B.G."/>
            <person name="Barrell B.G."/>
        </authorList>
    </citation>
    <scope>NUCLEOTIDE SEQUENCE [LARGE SCALE GENOMIC DNA]</scope>
    <source>
        <strain>DSM 15465 / Z2491</strain>
    </source>
</reference>
<protein>
    <recommendedName>
        <fullName evidence="1">Cysteine desulfurase IscS</fullName>
        <ecNumber evidence="1">2.8.1.7</ecNumber>
    </recommendedName>
</protein>
<sequence length="404" mass="44742">MTVKTPVYLDYAATTTVDKRVAEKMIPYLTETFGNPASNSHAFGWEAEEAVEKARADIAALINADPKEIVFTSGATESDNLAIKGAANFYKTKGKHLITVKTEHKAVLDTMRELERQGFEVTYLGVQENGLIDLEELKAAIRDDTILVSVMWANNEIGVVQDIPAIGEICRERKIVFHVDAAQACGKVPVDVEAAKIDLLSMSAHKVYGPKGIGALYVRRKPRVRLEAQMHGGGHERGFRSGTLPTHQIVGMGEAFRIAKEELEQDMAHYRKLRDIFLKGIEGIEEVYINGDLEHRVPNNLNVSFNFVEGESLIMAVKELAVSSGSACTSASLEPSYVLRALGRNDELAHSSLRITFGRMTTEEEVQFAAELIKSKIGKLRELSPLWEMFKDGIDLNSIEWAAH</sequence>
<dbReference type="EC" id="2.8.1.7" evidence="1"/>
<dbReference type="EMBL" id="AL157959">
    <property type="protein sequence ID" value="CAM08737.1"/>
    <property type="molecule type" value="Genomic_DNA"/>
</dbReference>
<dbReference type="PIR" id="E81852">
    <property type="entry name" value="E81852"/>
</dbReference>
<dbReference type="RefSeq" id="WP_002237094.1">
    <property type="nucleotide sequence ID" value="NC_003116.1"/>
</dbReference>
<dbReference type="SMR" id="Q9JTX0"/>
<dbReference type="EnsemblBacteria" id="CAM08737">
    <property type="protein sequence ID" value="CAM08737"/>
    <property type="gene ID" value="NMA1594"/>
</dbReference>
<dbReference type="KEGG" id="nma:NMA1594"/>
<dbReference type="HOGENOM" id="CLU_003433_0_2_4"/>
<dbReference type="UniPathway" id="UPA00266"/>
<dbReference type="Proteomes" id="UP000000626">
    <property type="component" value="Chromosome"/>
</dbReference>
<dbReference type="GO" id="GO:1990221">
    <property type="term" value="C:L-cysteine desulfurase complex"/>
    <property type="evidence" value="ECO:0007669"/>
    <property type="project" value="UniProtKB-ARBA"/>
</dbReference>
<dbReference type="GO" id="GO:0051537">
    <property type="term" value="F:2 iron, 2 sulfur cluster binding"/>
    <property type="evidence" value="ECO:0007669"/>
    <property type="project" value="UniProtKB-UniRule"/>
</dbReference>
<dbReference type="GO" id="GO:0031071">
    <property type="term" value="F:cysteine desulfurase activity"/>
    <property type="evidence" value="ECO:0007669"/>
    <property type="project" value="UniProtKB-UniRule"/>
</dbReference>
<dbReference type="GO" id="GO:0046872">
    <property type="term" value="F:metal ion binding"/>
    <property type="evidence" value="ECO:0007669"/>
    <property type="project" value="UniProtKB-KW"/>
</dbReference>
<dbReference type="GO" id="GO:0030170">
    <property type="term" value="F:pyridoxal phosphate binding"/>
    <property type="evidence" value="ECO:0007669"/>
    <property type="project" value="UniProtKB-UniRule"/>
</dbReference>
<dbReference type="GO" id="GO:0044571">
    <property type="term" value="P:[2Fe-2S] cluster assembly"/>
    <property type="evidence" value="ECO:0007669"/>
    <property type="project" value="UniProtKB-UniRule"/>
</dbReference>
<dbReference type="FunFam" id="3.40.640.10:FF:000003">
    <property type="entry name" value="Cysteine desulfurase IscS"/>
    <property type="match status" value="1"/>
</dbReference>
<dbReference type="FunFam" id="3.90.1150.10:FF:000002">
    <property type="entry name" value="Cysteine desulfurase IscS"/>
    <property type="match status" value="1"/>
</dbReference>
<dbReference type="Gene3D" id="3.90.1150.10">
    <property type="entry name" value="Aspartate Aminotransferase, domain 1"/>
    <property type="match status" value="1"/>
</dbReference>
<dbReference type="Gene3D" id="3.40.640.10">
    <property type="entry name" value="Type I PLP-dependent aspartate aminotransferase-like (Major domain)"/>
    <property type="match status" value="1"/>
</dbReference>
<dbReference type="HAMAP" id="MF_00331">
    <property type="entry name" value="Cys_desulf_IscS"/>
    <property type="match status" value="1"/>
</dbReference>
<dbReference type="InterPro" id="IPR000192">
    <property type="entry name" value="Aminotrans_V_dom"/>
</dbReference>
<dbReference type="InterPro" id="IPR020578">
    <property type="entry name" value="Aminotrans_V_PyrdxlP_BS"/>
</dbReference>
<dbReference type="InterPro" id="IPR010240">
    <property type="entry name" value="Cys_deSase_IscS"/>
</dbReference>
<dbReference type="InterPro" id="IPR016454">
    <property type="entry name" value="Cysteine_dSase"/>
</dbReference>
<dbReference type="InterPro" id="IPR015424">
    <property type="entry name" value="PyrdxlP-dep_Trfase"/>
</dbReference>
<dbReference type="InterPro" id="IPR015421">
    <property type="entry name" value="PyrdxlP-dep_Trfase_major"/>
</dbReference>
<dbReference type="InterPro" id="IPR015422">
    <property type="entry name" value="PyrdxlP-dep_Trfase_small"/>
</dbReference>
<dbReference type="NCBIfam" id="TIGR02006">
    <property type="entry name" value="IscS"/>
    <property type="match status" value="1"/>
</dbReference>
<dbReference type="NCBIfam" id="NF010611">
    <property type="entry name" value="PRK14012.1"/>
    <property type="match status" value="1"/>
</dbReference>
<dbReference type="PANTHER" id="PTHR11601:SF34">
    <property type="entry name" value="CYSTEINE DESULFURASE"/>
    <property type="match status" value="1"/>
</dbReference>
<dbReference type="PANTHER" id="PTHR11601">
    <property type="entry name" value="CYSTEINE DESULFURYLASE FAMILY MEMBER"/>
    <property type="match status" value="1"/>
</dbReference>
<dbReference type="Pfam" id="PF00266">
    <property type="entry name" value="Aminotran_5"/>
    <property type="match status" value="1"/>
</dbReference>
<dbReference type="PIRSF" id="PIRSF005572">
    <property type="entry name" value="NifS"/>
    <property type="match status" value="1"/>
</dbReference>
<dbReference type="SUPFAM" id="SSF53383">
    <property type="entry name" value="PLP-dependent transferases"/>
    <property type="match status" value="1"/>
</dbReference>
<dbReference type="PROSITE" id="PS00595">
    <property type="entry name" value="AA_TRANSFER_CLASS_5"/>
    <property type="match status" value="1"/>
</dbReference>
<keyword id="KW-0001">2Fe-2S</keyword>
<keyword id="KW-0963">Cytoplasm</keyword>
<keyword id="KW-0408">Iron</keyword>
<keyword id="KW-0411">Iron-sulfur</keyword>
<keyword id="KW-0479">Metal-binding</keyword>
<keyword id="KW-0663">Pyridoxal phosphate</keyword>
<keyword id="KW-0808">Transferase</keyword>
<name>ISCS_NEIMA</name>
<gene>
    <name evidence="1" type="primary">iscS</name>
    <name type="ordered locus">NMA1594</name>
</gene>
<comment type="function">
    <text evidence="1">Master enzyme that delivers sulfur to a number of partners involved in Fe-S cluster assembly, tRNA modification or cofactor biosynthesis. Catalyzes the removal of elemental sulfur atoms from cysteine to produce alanine. Functions as a sulfur delivery protein for Fe-S cluster synthesis onto IscU, an Fe-S scaffold assembly protein, as well as other S acceptor proteins.</text>
</comment>
<comment type="catalytic activity">
    <reaction evidence="1">
        <text>(sulfur carrier)-H + L-cysteine = (sulfur carrier)-SH + L-alanine</text>
        <dbReference type="Rhea" id="RHEA:43892"/>
        <dbReference type="Rhea" id="RHEA-COMP:14737"/>
        <dbReference type="Rhea" id="RHEA-COMP:14739"/>
        <dbReference type="ChEBI" id="CHEBI:29917"/>
        <dbReference type="ChEBI" id="CHEBI:35235"/>
        <dbReference type="ChEBI" id="CHEBI:57972"/>
        <dbReference type="ChEBI" id="CHEBI:64428"/>
        <dbReference type="EC" id="2.8.1.7"/>
    </reaction>
</comment>
<comment type="cofactor">
    <cofactor evidence="1">
        <name>pyridoxal 5'-phosphate</name>
        <dbReference type="ChEBI" id="CHEBI:597326"/>
    </cofactor>
</comment>
<comment type="pathway">
    <text evidence="1">Cofactor biosynthesis; iron-sulfur cluster biosynthesis.</text>
</comment>
<comment type="subunit">
    <text evidence="1">Homodimer. Forms a heterotetramer with IscU, interacts with other sulfur acceptors.</text>
</comment>
<comment type="subcellular location">
    <subcellularLocation>
        <location evidence="1">Cytoplasm</location>
    </subcellularLocation>
</comment>
<comment type="similarity">
    <text evidence="1">Belongs to the class-V pyridoxal-phosphate-dependent aminotransferase family. NifS/IscS subfamily.</text>
</comment>
<proteinExistence type="inferred from homology"/>